<feature type="chain" id="PRO_0000438886" description="Fumarate reductase flavoprotein subunit">
    <location>
        <begin position="1"/>
        <end position="598"/>
    </location>
</feature>
<feature type="region of interest" description="Disordered" evidence="2">
    <location>
        <begin position="577"/>
        <end position="598"/>
    </location>
</feature>
<feature type="compositionally biased region" description="Basic and acidic residues" evidence="2">
    <location>
        <begin position="587"/>
        <end position="598"/>
    </location>
</feature>
<feature type="active site" evidence="1">
    <location>
        <position position="233"/>
    </location>
</feature>
<feature type="active site" evidence="1">
    <location>
        <position position="249"/>
    </location>
</feature>
<feature type="binding site" evidence="1">
    <location>
        <begin position="12"/>
        <end position="16"/>
    </location>
    <ligand>
        <name>FAD</name>
        <dbReference type="ChEBI" id="CHEBI:57692"/>
    </ligand>
</feature>
<feature type="binding site" evidence="1">
    <location>
        <begin position="36"/>
        <end position="38"/>
    </location>
    <ligand>
        <name>FAD</name>
        <dbReference type="ChEBI" id="CHEBI:57692"/>
    </ligand>
</feature>
<feature type="binding site" evidence="1">
    <location>
        <begin position="44"/>
        <end position="52"/>
    </location>
    <ligand>
        <name>FAD</name>
        <dbReference type="ChEBI" id="CHEBI:57692"/>
    </ligand>
</feature>
<feature type="binding site" evidence="1">
    <location>
        <begin position="156"/>
        <end position="158"/>
    </location>
    <ligand>
        <name>FAD</name>
        <dbReference type="ChEBI" id="CHEBI:57692"/>
    </ligand>
</feature>
<feature type="binding site" evidence="1">
    <location>
        <position position="212"/>
    </location>
    <ligand>
        <name>FAD</name>
        <dbReference type="ChEBI" id="CHEBI:57692"/>
    </ligand>
</feature>
<feature type="binding site" evidence="1">
    <location>
        <begin position="356"/>
        <end position="357"/>
    </location>
    <ligand>
        <name>FAD</name>
        <dbReference type="ChEBI" id="CHEBI:57692"/>
    </ligand>
</feature>
<feature type="binding site" evidence="1">
    <location>
        <position position="380"/>
    </location>
    <ligand>
        <name>FAD</name>
        <dbReference type="ChEBI" id="CHEBI:57692"/>
    </ligand>
</feature>
<feature type="binding site" evidence="1">
    <location>
        <begin position="391"/>
        <end position="397"/>
    </location>
    <ligand>
        <name>FAD</name>
        <dbReference type="ChEBI" id="CHEBI:57692"/>
    </ligand>
</feature>
<feature type="modified residue" description="Tele-8alpha-FAD histidine" evidence="1">
    <location>
        <position position="45"/>
    </location>
</feature>
<dbReference type="EC" id="1.3.5.1" evidence="1"/>
<dbReference type="EMBL" id="CP025084">
    <property type="protein sequence ID" value="ESN61646.1"/>
    <property type="molecule type" value="Genomic_DNA"/>
</dbReference>
<dbReference type="RefSeq" id="WP_021017313.1">
    <property type="nucleotide sequence ID" value="NZ_CP025084.1"/>
</dbReference>
<dbReference type="SMR" id="V3TQ67"/>
<dbReference type="IntAct" id="V3TQ67">
    <property type="interactions" value="1"/>
</dbReference>
<dbReference type="MINT" id="V3TQ67"/>
<dbReference type="STRING" id="104623.Ser39006_04053"/>
<dbReference type="eggNOG" id="COG1053">
    <property type="taxonomic scope" value="Bacteria"/>
</dbReference>
<dbReference type="OrthoDB" id="9806724at2"/>
<dbReference type="Proteomes" id="UP000017700">
    <property type="component" value="Chromosome"/>
</dbReference>
<dbReference type="GO" id="GO:0005886">
    <property type="term" value="C:plasma membrane"/>
    <property type="evidence" value="ECO:0007669"/>
    <property type="project" value="UniProtKB-SubCell"/>
</dbReference>
<dbReference type="GO" id="GO:0009055">
    <property type="term" value="F:electron transfer activity"/>
    <property type="evidence" value="ECO:0007669"/>
    <property type="project" value="TreeGrafter"/>
</dbReference>
<dbReference type="GO" id="GO:0050660">
    <property type="term" value="F:flavin adenine dinucleotide binding"/>
    <property type="evidence" value="ECO:0007669"/>
    <property type="project" value="InterPro"/>
</dbReference>
<dbReference type="GO" id="GO:0008177">
    <property type="term" value="F:succinate dehydrogenase (quinone) activity"/>
    <property type="evidence" value="ECO:0007669"/>
    <property type="project" value="RHEA"/>
</dbReference>
<dbReference type="GO" id="GO:0009061">
    <property type="term" value="P:anaerobic respiration"/>
    <property type="evidence" value="ECO:0007669"/>
    <property type="project" value="InterPro"/>
</dbReference>
<dbReference type="GO" id="GO:0022900">
    <property type="term" value="P:electron transport chain"/>
    <property type="evidence" value="ECO:0007669"/>
    <property type="project" value="InterPro"/>
</dbReference>
<dbReference type="GO" id="GO:0006113">
    <property type="term" value="P:fermentation"/>
    <property type="evidence" value="ECO:0007669"/>
    <property type="project" value="TreeGrafter"/>
</dbReference>
<dbReference type="FunFam" id="3.50.50.60:FF:000017">
    <property type="entry name" value="Fumarate reductase flavoprotein subunit"/>
    <property type="match status" value="1"/>
</dbReference>
<dbReference type="FunFam" id="3.90.700.10:FF:000003">
    <property type="entry name" value="Fumarate reductase flavoprotein subunit"/>
    <property type="match status" value="1"/>
</dbReference>
<dbReference type="FunFam" id="4.10.80.40:FF:000003">
    <property type="entry name" value="Fumarate reductase flavoprotein subunit"/>
    <property type="match status" value="1"/>
</dbReference>
<dbReference type="FunFam" id="1.20.58.100:FF:000001">
    <property type="entry name" value="Succinate dehydrogenase flavoprotein subunit (SdhA)"/>
    <property type="match status" value="1"/>
</dbReference>
<dbReference type="Gene3D" id="3.50.50.60">
    <property type="entry name" value="FAD/NAD(P)-binding domain"/>
    <property type="match status" value="1"/>
</dbReference>
<dbReference type="Gene3D" id="1.20.58.100">
    <property type="entry name" value="Fumarate reductase/succinate dehydrogenase flavoprotein-like, C-terminal domain"/>
    <property type="match status" value="1"/>
</dbReference>
<dbReference type="Gene3D" id="4.10.80.40">
    <property type="entry name" value="succinate dehydrogenase protein domain"/>
    <property type="match status" value="1"/>
</dbReference>
<dbReference type="Gene3D" id="3.90.700.10">
    <property type="entry name" value="Succinate dehydrogenase/fumarate reductase flavoprotein, catalytic domain"/>
    <property type="match status" value="1"/>
</dbReference>
<dbReference type="InterPro" id="IPR003953">
    <property type="entry name" value="FAD-dep_OxRdtase_2_FAD-bd"/>
</dbReference>
<dbReference type="InterPro" id="IPR036188">
    <property type="entry name" value="FAD/NAD-bd_sf"/>
</dbReference>
<dbReference type="InterPro" id="IPR003952">
    <property type="entry name" value="FRD_SDH_FAD_BS"/>
</dbReference>
<dbReference type="InterPro" id="IPR037099">
    <property type="entry name" value="Fum_R/Succ_DH_flav-like_C_sf"/>
</dbReference>
<dbReference type="InterPro" id="IPR015939">
    <property type="entry name" value="Fum_Rdtase/Succ_DH_flav-like_C"/>
</dbReference>
<dbReference type="InterPro" id="IPR005884">
    <property type="entry name" value="Fum_red_fp"/>
</dbReference>
<dbReference type="InterPro" id="IPR030664">
    <property type="entry name" value="SdhA/FrdA/AprA"/>
</dbReference>
<dbReference type="InterPro" id="IPR027477">
    <property type="entry name" value="Succ_DH/fumarate_Rdtase_cat_sf"/>
</dbReference>
<dbReference type="InterPro" id="IPR014006">
    <property type="entry name" value="Succ_Dhase_FrdA_Gneg"/>
</dbReference>
<dbReference type="NCBIfam" id="TIGR01176">
    <property type="entry name" value="fum_red_Fp"/>
    <property type="match status" value="1"/>
</dbReference>
<dbReference type="NCBIfam" id="NF006686">
    <property type="entry name" value="PRK09231.1"/>
    <property type="match status" value="1"/>
</dbReference>
<dbReference type="NCBIfam" id="TIGR01812">
    <property type="entry name" value="sdhA_frdA_Gneg"/>
    <property type="match status" value="1"/>
</dbReference>
<dbReference type="PANTHER" id="PTHR11632:SF82">
    <property type="entry name" value="FUMARATE REDUCTASE FLAVOPROTEIN SUBUNIT"/>
    <property type="match status" value="1"/>
</dbReference>
<dbReference type="PANTHER" id="PTHR11632">
    <property type="entry name" value="SUCCINATE DEHYDROGENASE 2 FLAVOPROTEIN SUBUNIT"/>
    <property type="match status" value="1"/>
</dbReference>
<dbReference type="Pfam" id="PF00890">
    <property type="entry name" value="FAD_binding_2"/>
    <property type="match status" value="1"/>
</dbReference>
<dbReference type="Pfam" id="PF02910">
    <property type="entry name" value="Succ_DH_flav_C"/>
    <property type="match status" value="1"/>
</dbReference>
<dbReference type="PIRSF" id="PIRSF000171">
    <property type="entry name" value="SDHA_APRA_LASPO"/>
    <property type="match status" value="1"/>
</dbReference>
<dbReference type="PRINTS" id="PR00368">
    <property type="entry name" value="FADPNR"/>
</dbReference>
<dbReference type="PRINTS" id="PR00411">
    <property type="entry name" value="PNDRDTASEI"/>
</dbReference>
<dbReference type="SUPFAM" id="SSF51905">
    <property type="entry name" value="FAD/NAD(P)-binding domain"/>
    <property type="match status" value="1"/>
</dbReference>
<dbReference type="SUPFAM" id="SSF46977">
    <property type="entry name" value="Succinate dehydrogenase/fumarate reductase flavoprotein C-terminal domain"/>
    <property type="match status" value="1"/>
</dbReference>
<dbReference type="SUPFAM" id="SSF56425">
    <property type="entry name" value="Succinate dehydrogenase/fumarate reductase flavoprotein, catalytic domain"/>
    <property type="match status" value="1"/>
</dbReference>
<dbReference type="PROSITE" id="PS00504">
    <property type="entry name" value="FRD_SDH_FAD_BINDING"/>
    <property type="match status" value="1"/>
</dbReference>
<protein>
    <recommendedName>
        <fullName>Fumarate reductase flavoprotein subunit</fullName>
        <ecNumber evidence="1">1.3.5.1</ecNumber>
    </recommendedName>
    <alternativeName>
        <fullName evidence="5">Quinol-fumarate reductase flavoprotein subunit</fullName>
        <shortName evidence="5">QFR flavoprotein subunit</shortName>
    </alternativeName>
</protein>
<organism>
    <name type="scientific">Serratia sp. (strain ATCC 39006)</name>
    <name type="common">Prodigiosinella confusarubida</name>
    <dbReference type="NCBI Taxonomy" id="104623"/>
    <lineage>
        <taxon>Bacteria</taxon>
        <taxon>Pseudomonadati</taxon>
        <taxon>Pseudomonadota</taxon>
        <taxon>Gammaproteobacteria</taxon>
        <taxon>Enterobacterales</taxon>
        <taxon>Pectobacteriaceae</taxon>
        <taxon>Prodigiosinella</taxon>
    </lineage>
</organism>
<gene>
    <name evidence="4" type="primary">frdA</name>
    <name type="ORF">Ser39006_04053</name>
</gene>
<accession>V3TQ67</accession>
<keyword id="KW-0997">Cell inner membrane</keyword>
<keyword id="KW-1003">Cell membrane</keyword>
<keyword id="KW-0249">Electron transport</keyword>
<keyword id="KW-0274">FAD</keyword>
<keyword id="KW-0285">Flavoprotein</keyword>
<keyword id="KW-0472">Membrane</keyword>
<keyword id="KW-0547">Nucleotide-binding</keyword>
<keyword id="KW-0560">Oxidoreductase</keyword>
<keyword id="KW-1185">Reference proteome</keyword>
<keyword id="KW-0813">Transport</keyword>
<evidence type="ECO:0000250" key="1">
    <source>
        <dbReference type="UniProtKB" id="P00363"/>
    </source>
</evidence>
<evidence type="ECO:0000256" key="2">
    <source>
        <dbReference type="SAM" id="MobiDB-lite"/>
    </source>
</evidence>
<evidence type="ECO:0000269" key="3">
    <source>
    </source>
</evidence>
<evidence type="ECO:0000303" key="4">
    <source>
    </source>
</evidence>
<evidence type="ECO:0000305" key="5"/>
<evidence type="ECO:0000305" key="6">
    <source>
    </source>
</evidence>
<reference key="1">
    <citation type="journal article" date="2013" name="Genome Announc.">
        <title>Draft genome sequence of Serratia sp. strain ATCC 39006, a model bacterium for analysis of the biosynthesis and regulation of prodigiosin, a carbapenem, and gas vesicles.</title>
        <authorList>
            <person name="Fineran P.C."/>
            <person name="Iglesias Cans M.C."/>
            <person name="Ramsay J.P."/>
            <person name="Wilf N.M."/>
            <person name="Cossyleon D."/>
            <person name="McNeil M.B."/>
            <person name="Williamson N.R."/>
            <person name="Monson R.E."/>
            <person name="Becher S.A."/>
            <person name="Stanton J.A."/>
            <person name="Brugger K."/>
            <person name="Brown S.D."/>
            <person name="Salmond G.P."/>
        </authorList>
    </citation>
    <scope>NUCLEOTIDE SEQUENCE [LARGE SCALE GENOMIC DNA]</scope>
    <source>
        <strain>ATCC 39006 / SC 11482</strain>
    </source>
</reference>
<reference key="2">
    <citation type="journal article" date="2014" name="FEBS Lett.">
        <title>The succinate dehydrogenase assembly factor, SdhE, is required for the flavinylation and activation of fumarate reductase in bacteria.</title>
        <authorList>
            <person name="McNeil M.B."/>
            <person name="Hampton H.G."/>
            <person name="Hards K.J."/>
            <person name="Watson B.N."/>
            <person name="Cook G.M."/>
            <person name="Fineran P.C."/>
        </authorList>
    </citation>
    <scope>FUNCTION</scope>
    <scope>COFACTOR</scope>
    <scope>SUBUNIT</scope>
    <scope>DISRUPTION PHENOTYPE</scope>
    <source>
        <strain>ATCC 39006 / SC 11482</strain>
    </source>
</reference>
<comment type="function">
    <text evidence="1 6">Two distinct, membrane-bound, FAD-containing enzymes are responsible for the catalysis of fumarate and succinate interconversion; the fumarate reductase is used in anaerobic growth, and the succinate dehydrogenase is used in aerobic growth.</text>
</comment>
<comment type="catalytic activity">
    <reaction evidence="1">
        <text>a quinone + succinate = fumarate + a quinol</text>
        <dbReference type="Rhea" id="RHEA:40523"/>
        <dbReference type="ChEBI" id="CHEBI:24646"/>
        <dbReference type="ChEBI" id="CHEBI:29806"/>
        <dbReference type="ChEBI" id="CHEBI:30031"/>
        <dbReference type="ChEBI" id="CHEBI:132124"/>
        <dbReference type="EC" id="1.3.5.1"/>
    </reaction>
</comment>
<comment type="catalytic activity">
    <reaction evidence="1">
        <text>a menaquinone + succinate = a menaquinol + fumarate</text>
        <dbReference type="Rhea" id="RHEA:27834"/>
        <dbReference type="Rhea" id="RHEA-COMP:9537"/>
        <dbReference type="Rhea" id="RHEA-COMP:9539"/>
        <dbReference type="ChEBI" id="CHEBI:16374"/>
        <dbReference type="ChEBI" id="CHEBI:18151"/>
        <dbReference type="ChEBI" id="CHEBI:29806"/>
        <dbReference type="ChEBI" id="CHEBI:30031"/>
        <dbReference type="EC" id="1.3.5.1"/>
    </reaction>
</comment>
<comment type="cofactor">
    <cofactor evidence="3">
        <name>FAD</name>
        <dbReference type="ChEBI" id="CHEBI:57692"/>
    </cofactor>
    <text evidence="3">Flavinylated by SdhE, flavinylation occurs at a low level in the absence of SdhE.</text>
</comment>
<comment type="subunit">
    <text evidence="1 3">Part of an enzyme complex containing four subunits: a flavoprotein (FrdA), an iron-sulfur protein (FrdB), and two hydrophobic anchor proteins (FrdC and FrdD) (By similarity). Interacts with SdhE (PubMed:24374335).</text>
</comment>
<comment type="subcellular location">
    <subcellularLocation>
        <location evidence="1">Cell inner membrane</location>
        <topology evidence="1">Peripheral membrane protein</topology>
        <orientation evidence="1">Cytoplasmic side</orientation>
    </subcellularLocation>
</comment>
<comment type="disruption phenotype">
    <text evidence="3">Significant growth defect during anaerobic growth on glycerol fumarate medium (a quadruple fdrABCD deletion); the defect is similar in strains also containing an sdhE deletion (PubMed:24374335).</text>
</comment>
<comment type="similarity">
    <text>Belongs to the FAD-dependent oxidoreductase 2 family. FRD/SDH subfamily.</text>
</comment>
<name>FRDA_SERS3</name>
<sequence>MQTFNADLAIIGAGGAGLRAAIAAAEANPQLKIALISKVYPMRSHTVAAEGGSAAVTQDHDSFDFHFHDTVAGGDWLCEQDVVDQFVQSCPREMTQLEQWGCPWSRKPDGSVNVRRFGGMKIERTWFAADKTGFHMLHTLFQTSLKYPQIQRFDEHFVLDILVDDGQARGLVAINMMEGTLVQIRANAVIMATGGAGRVYRYNTNGGIVTGDGMGMAFRHGVPLRDMEFVQYHPTGLPGSGILMTEGCRGEGGIMVNKDGYRYLQDYGMGPETPLGQPKNKYMELGPRDKVSQAFWHEWRAGRTISTPLGDVVYLDLRHLGEKKLKERLPFICELAQAYVGVDPVKEPIPIRPTAHYTMGGIETDQQCETRIKGLFAAGECSSVGLHGANRLGSNSLAELVVFGRIAGEHATQRSLESAPANASALDAQARDVEQRLHTLMKQEGTESWAKIRDEMGISMEEGCGIYRTTELMQKTLDKLAELKERFKRVKITDHSSVFNTDLLYTIELGHSLDVAQCMAHSAINRKESRGAHQRLDEGCTERDDVNFLKHTLAFYNPEGAPRLEYSDVKITKLPPAKRVYGGEADAQEKSDKEQANG</sequence>
<proteinExistence type="evidence at protein level"/>